<name>NU2C_SYNS9</name>
<gene>
    <name evidence="1" type="primary">ndhB</name>
    <name type="ordered locus">Syncc9902_1766</name>
</gene>
<proteinExistence type="inferred from homology"/>
<accession>Q3AWJ7</accession>
<evidence type="ECO:0000255" key="1">
    <source>
        <dbReference type="HAMAP-Rule" id="MF_00445"/>
    </source>
</evidence>
<feature type="chain" id="PRO_1000026156" description="NAD(P)H-quinone oxidoreductase subunit 2">
    <location>
        <begin position="1"/>
        <end position="523"/>
    </location>
</feature>
<feature type="transmembrane region" description="Helical" evidence="1">
    <location>
        <begin position="29"/>
        <end position="49"/>
    </location>
</feature>
<feature type="transmembrane region" description="Helical" evidence="1">
    <location>
        <begin position="57"/>
        <end position="77"/>
    </location>
</feature>
<feature type="transmembrane region" description="Helical" evidence="1">
    <location>
        <begin position="94"/>
        <end position="114"/>
    </location>
</feature>
<feature type="transmembrane region" description="Helical" evidence="1">
    <location>
        <begin position="132"/>
        <end position="152"/>
    </location>
</feature>
<feature type="transmembrane region" description="Helical" evidence="1">
    <location>
        <begin position="182"/>
        <end position="202"/>
    </location>
</feature>
<feature type="transmembrane region" description="Helical" evidence="1">
    <location>
        <begin position="221"/>
        <end position="241"/>
    </location>
</feature>
<feature type="transmembrane region" description="Helical" evidence="1">
    <location>
        <begin position="255"/>
        <end position="275"/>
    </location>
</feature>
<feature type="transmembrane region" description="Helical" evidence="1">
    <location>
        <begin position="291"/>
        <end position="311"/>
    </location>
</feature>
<feature type="transmembrane region" description="Helical" evidence="1">
    <location>
        <begin position="317"/>
        <end position="337"/>
    </location>
</feature>
<feature type="transmembrane region" description="Helical" evidence="1">
    <location>
        <begin position="345"/>
        <end position="365"/>
    </location>
</feature>
<feature type="transmembrane region" description="Helical" evidence="1">
    <location>
        <begin position="389"/>
        <end position="409"/>
    </location>
</feature>
<feature type="transmembrane region" description="Helical" evidence="1">
    <location>
        <begin position="424"/>
        <end position="444"/>
    </location>
</feature>
<feature type="transmembrane region" description="Helical" evidence="1">
    <location>
        <begin position="477"/>
        <end position="497"/>
    </location>
</feature>
<organism>
    <name type="scientific">Synechococcus sp. (strain CC9902)</name>
    <dbReference type="NCBI Taxonomy" id="316279"/>
    <lineage>
        <taxon>Bacteria</taxon>
        <taxon>Bacillati</taxon>
        <taxon>Cyanobacteriota</taxon>
        <taxon>Cyanophyceae</taxon>
        <taxon>Synechococcales</taxon>
        <taxon>Synechococcaceae</taxon>
        <taxon>Synechococcus</taxon>
    </lineage>
</organism>
<protein>
    <recommendedName>
        <fullName evidence="1">NAD(P)H-quinone oxidoreductase subunit 2</fullName>
        <ecNumber evidence="1">7.1.1.-</ecNumber>
    </recommendedName>
    <alternativeName>
        <fullName evidence="1">NAD(P)H dehydrogenase subunit 2</fullName>
    </alternativeName>
    <alternativeName>
        <fullName evidence="1">NADH-plastoquinone oxidoreductase subunit 2</fullName>
    </alternativeName>
    <alternativeName>
        <fullName evidence="1">NDH-1, subunit 2</fullName>
    </alternativeName>
</protein>
<comment type="function">
    <text evidence="1">NDH-1 shuttles electrons from an unknown electron donor, via FMN and iron-sulfur (Fe-S) centers, to quinones in the respiratory and/or the photosynthetic chain. The immediate electron acceptor for the enzyme in this species is believed to be plastoquinone. Couples the redox reaction to proton translocation, and thus conserves the redox energy in a proton gradient. Cyanobacterial NDH-1 also plays a role in inorganic carbon-concentration.</text>
</comment>
<comment type="catalytic activity">
    <reaction evidence="1">
        <text>a plastoquinone + NADH + (n+1) H(+)(in) = a plastoquinol + NAD(+) + n H(+)(out)</text>
        <dbReference type="Rhea" id="RHEA:42608"/>
        <dbReference type="Rhea" id="RHEA-COMP:9561"/>
        <dbReference type="Rhea" id="RHEA-COMP:9562"/>
        <dbReference type="ChEBI" id="CHEBI:15378"/>
        <dbReference type="ChEBI" id="CHEBI:17757"/>
        <dbReference type="ChEBI" id="CHEBI:57540"/>
        <dbReference type="ChEBI" id="CHEBI:57945"/>
        <dbReference type="ChEBI" id="CHEBI:62192"/>
    </reaction>
</comment>
<comment type="catalytic activity">
    <reaction evidence="1">
        <text>a plastoquinone + NADPH + (n+1) H(+)(in) = a plastoquinol + NADP(+) + n H(+)(out)</text>
        <dbReference type="Rhea" id="RHEA:42612"/>
        <dbReference type="Rhea" id="RHEA-COMP:9561"/>
        <dbReference type="Rhea" id="RHEA-COMP:9562"/>
        <dbReference type="ChEBI" id="CHEBI:15378"/>
        <dbReference type="ChEBI" id="CHEBI:17757"/>
        <dbReference type="ChEBI" id="CHEBI:57783"/>
        <dbReference type="ChEBI" id="CHEBI:58349"/>
        <dbReference type="ChEBI" id="CHEBI:62192"/>
    </reaction>
</comment>
<comment type="subunit">
    <text evidence="1">NDH-1 can be composed of about 15 different subunits; different subcomplexes with different compositions have been identified which probably have different functions.</text>
</comment>
<comment type="subcellular location">
    <subcellularLocation>
        <location evidence="1">Cellular thylakoid membrane</location>
        <topology evidence="1">Multi-pass membrane protein</topology>
    </subcellularLocation>
</comment>
<comment type="similarity">
    <text evidence="1">Belongs to the complex I subunit 2 family.</text>
</comment>
<dbReference type="EC" id="7.1.1.-" evidence="1"/>
<dbReference type="EMBL" id="CP000097">
    <property type="protein sequence ID" value="ABB26723.1"/>
    <property type="molecule type" value="Genomic_DNA"/>
</dbReference>
<dbReference type="RefSeq" id="WP_011360530.1">
    <property type="nucleotide sequence ID" value="NC_007513.1"/>
</dbReference>
<dbReference type="SMR" id="Q3AWJ7"/>
<dbReference type="STRING" id="316279.Syncc9902_1766"/>
<dbReference type="KEGG" id="sye:Syncc9902_1766"/>
<dbReference type="eggNOG" id="COG1007">
    <property type="taxonomic scope" value="Bacteria"/>
</dbReference>
<dbReference type="HOGENOM" id="CLU_007100_1_2_3"/>
<dbReference type="OrthoDB" id="9811718at2"/>
<dbReference type="Proteomes" id="UP000002712">
    <property type="component" value="Chromosome"/>
</dbReference>
<dbReference type="GO" id="GO:0031676">
    <property type="term" value="C:plasma membrane-derived thylakoid membrane"/>
    <property type="evidence" value="ECO:0007669"/>
    <property type="project" value="UniProtKB-SubCell"/>
</dbReference>
<dbReference type="GO" id="GO:0008137">
    <property type="term" value="F:NADH dehydrogenase (ubiquinone) activity"/>
    <property type="evidence" value="ECO:0007669"/>
    <property type="project" value="InterPro"/>
</dbReference>
<dbReference type="GO" id="GO:0048038">
    <property type="term" value="F:quinone binding"/>
    <property type="evidence" value="ECO:0007669"/>
    <property type="project" value="UniProtKB-KW"/>
</dbReference>
<dbReference type="GO" id="GO:0042773">
    <property type="term" value="P:ATP synthesis coupled electron transport"/>
    <property type="evidence" value="ECO:0007669"/>
    <property type="project" value="InterPro"/>
</dbReference>
<dbReference type="GO" id="GO:0019684">
    <property type="term" value="P:photosynthesis, light reaction"/>
    <property type="evidence" value="ECO:0007669"/>
    <property type="project" value="UniProtKB-UniRule"/>
</dbReference>
<dbReference type="HAMAP" id="MF_00445">
    <property type="entry name" value="NDH1_NuoN_1"/>
    <property type="match status" value="1"/>
</dbReference>
<dbReference type="InterPro" id="IPR010096">
    <property type="entry name" value="NADH-Q_OxRdtase_suN/2"/>
</dbReference>
<dbReference type="InterPro" id="IPR001750">
    <property type="entry name" value="ND/Mrp_TM"/>
</dbReference>
<dbReference type="NCBIfam" id="TIGR01770">
    <property type="entry name" value="NDH_I_N"/>
    <property type="match status" value="1"/>
</dbReference>
<dbReference type="NCBIfam" id="NF002701">
    <property type="entry name" value="PRK02504.1"/>
    <property type="match status" value="1"/>
</dbReference>
<dbReference type="PANTHER" id="PTHR22773">
    <property type="entry name" value="NADH DEHYDROGENASE"/>
    <property type="match status" value="1"/>
</dbReference>
<dbReference type="Pfam" id="PF00361">
    <property type="entry name" value="Proton_antipo_M"/>
    <property type="match status" value="1"/>
</dbReference>
<keyword id="KW-0472">Membrane</keyword>
<keyword id="KW-0520">NAD</keyword>
<keyword id="KW-0521">NADP</keyword>
<keyword id="KW-0618">Plastoquinone</keyword>
<keyword id="KW-0874">Quinone</keyword>
<keyword id="KW-1185">Reference proteome</keyword>
<keyword id="KW-0793">Thylakoid</keyword>
<keyword id="KW-1278">Translocase</keyword>
<keyword id="KW-0812">Transmembrane</keyword>
<keyword id="KW-1133">Transmembrane helix</keyword>
<keyword id="KW-0813">Transport</keyword>
<reference key="1">
    <citation type="submission" date="2005-08" db="EMBL/GenBank/DDBJ databases">
        <title>Complete sequence of Synechococcus sp. CC9902.</title>
        <authorList>
            <person name="Copeland A."/>
            <person name="Lucas S."/>
            <person name="Lapidus A."/>
            <person name="Barry K."/>
            <person name="Detter J.C."/>
            <person name="Glavina T."/>
            <person name="Hammon N."/>
            <person name="Israni S."/>
            <person name="Pitluck S."/>
            <person name="Martinez M."/>
            <person name="Schmutz J."/>
            <person name="Larimer F."/>
            <person name="Land M."/>
            <person name="Kyrpides N."/>
            <person name="Ivanova N."/>
            <person name="Richardson P."/>
        </authorList>
    </citation>
    <scope>NUCLEOTIDE SEQUENCE [LARGE SCALE GENOMIC DNA]</scope>
    <source>
        <strain>CC9902</strain>
    </source>
</reference>
<sequence>MPEMGALLLATQAMAAPGELLNLSLNASAVLPEGAVLLAMIATLLVDLAGEKVAARWVPPICYIGLGSALVLLALQWNAPLEPSFLGAFLADNLAVAFRAVIATSTLLSLLISWRYAEKSGTPVGEYAAILLAATLGAMLLCGATDLVSIFISLETLSVASYLLSGYMKRDARSSEAALKYLLVGSAAAAVFLYGASLLYGLSGSTSLEVIGVALQTSTTPIAALSLVFVLATVAFKIAAVPFHQWTPDVYEGSPTPVVAFLSVGSKAAGFALALRILVGCFGAFDDQWKLLFTVLAVLSMTLGNVVALAQTSMKRMLAYSSIGQAGFVMIGMVCGTEDGFAAMVLYMAAYLFMNLGAFACIILFSIRTGSDRISDYAGLYQKDPLITLGLSLCLLSLGGIPPMLGFFGKIYLFFAGWANHEYLLVVVGLITSVISIYYYISVIKMMVVKEPHEASDVVKNYPDVDWSLMGMQPLRVALIGCVGVTAIGGILSNPLFQWANEAVAETPLLQQAIALVGERGLG</sequence>